<protein>
    <recommendedName>
        <fullName>F-box protein At-B</fullName>
    </recommendedName>
</protein>
<sequence>MEEVTRSVLAEEILKRLDLENLCSVACVSTTLRSAVVSGVLPSLTSLDLSVFSPDDETLNHVLRGCIGLSSLTLNCLRLNAASVRGVLGPHLRELHLLRCSLLSSTVLTYIGTLCPNLRVLTLEMADLDSPDVFQSNLTQMLNGCPYLESLQLNIRGILVDATAFQSVRFSLPETLKALRLQPLLESEAILLMNRFKVTGTYLSQPDYNSALLSPSPSFTLQSLSLVLDLISDRLIIAITGSLPQLVKLDLEDRPEKEPFPDNDLTYTGLQALGFCQQLTSLSLVRTCYNRKISFKRINDMGIFLLSEACKGLESVRLGGFPKVSDAGFASLLHSCRNLKKFEVRGAFLLSDLAFHDVTGSSCSLQEVRLSTCPLITSEAVKKLGLCGNLEVLDLGSCKSISDSCLNSVSALRKLTSLNLAGADVTDSGMLALGKSDVPITQLSLRGCRRVSDRGISYLLNNEGTISKTLSTLDLGHMPGISDRAIHTITHCCKALTELSIRSCFHVTDSSIESLATWERQAEGGSKQLRKLNVHNCVSLTTGALRWLSKPSFAGLHWLGMGQTRFAGRKETVTAMICGQRPWLTLCFDGCELGCSDGWEFHTPQRH</sequence>
<reference key="1">
    <citation type="journal article" date="2000" name="Nature">
        <title>Sequence and analysis of chromosome 1 of the plant Arabidopsis thaliana.</title>
        <authorList>
            <person name="Theologis A."/>
            <person name="Ecker J.R."/>
            <person name="Palm C.J."/>
            <person name="Federspiel N.A."/>
            <person name="Kaul S."/>
            <person name="White O."/>
            <person name="Alonso J."/>
            <person name="Altafi H."/>
            <person name="Araujo R."/>
            <person name="Bowman C.L."/>
            <person name="Brooks S.Y."/>
            <person name="Buehler E."/>
            <person name="Chan A."/>
            <person name="Chao Q."/>
            <person name="Chen H."/>
            <person name="Cheuk R.F."/>
            <person name="Chin C.W."/>
            <person name="Chung M.K."/>
            <person name="Conn L."/>
            <person name="Conway A.B."/>
            <person name="Conway A.R."/>
            <person name="Creasy T.H."/>
            <person name="Dewar K."/>
            <person name="Dunn P."/>
            <person name="Etgu P."/>
            <person name="Feldblyum T.V."/>
            <person name="Feng J.-D."/>
            <person name="Fong B."/>
            <person name="Fujii C.Y."/>
            <person name="Gill J.E."/>
            <person name="Goldsmith A.D."/>
            <person name="Haas B."/>
            <person name="Hansen N.F."/>
            <person name="Hughes B."/>
            <person name="Huizar L."/>
            <person name="Hunter J.L."/>
            <person name="Jenkins J."/>
            <person name="Johnson-Hopson C."/>
            <person name="Khan S."/>
            <person name="Khaykin E."/>
            <person name="Kim C.J."/>
            <person name="Koo H.L."/>
            <person name="Kremenetskaia I."/>
            <person name="Kurtz D.B."/>
            <person name="Kwan A."/>
            <person name="Lam B."/>
            <person name="Langin-Hooper S."/>
            <person name="Lee A."/>
            <person name="Lee J.M."/>
            <person name="Lenz C.A."/>
            <person name="Li J.H."/>
            <person name="Li Y.-P."/>
            <person name="Lin X."/>
            <person name="Liu S.X."/>
            <person name="Liu Z.A."/>
            <person name="Luros J.S."/>
            <person name="Maiti R."/>
            <person name="Marziali A."/>
            <person name="Militscher J."/>
            <person name="Miranda M."/>
            <person name="Nguyen M."/>
            <person name="Nierman W.C."/>
            <person name="Osborne B.I."/>
            <person name="Pai G."/>
            <person name="Peterson J."/>
            <person name="Pham P.K."/>
            <person name="Rizzo M."/>
            <person name="Rooney T."/>
            <person name="Rowley D."/>
            <person name="Sakano H."/>
            <person name="Salzberg S.L."/>
            <person name="Schwartz J.R."/>
            <person name="Shinn P."/>
            <person name="Southwick A.M."/>
            <person name="Sun H."/>
            <person name="Tallon L.J."/>
            <person name="Tambunga G."/>
            <person name="Toriumi M.J."/>
            <person name="Town C.D."/>
            <person name="Utterback T."/>
            <person name="Van Aken S."/>
            <person name="Vaysberg M."/>
            <person name="Vysotskaia V.S."/>
            <person name="Walker M."/>
            <person name="Wu D."/>
            <person name="Yu G."/>
            <person name="Fraser C.M."/>
            <person name="Venter J.C."/>
            <person name="Davis R.W."/>
        </authorList>
    </citation>
    <scope>NUCLEOTIDE SEQUENCE [LARGE SCALE GENOMIC DNA]</scope>
    <source>
        <strain>cv. Columbia</strain>
    </source>
</reference>
<reference key="2">
    <citation type="journal article" date="2017" name="Plant J.">
        <title>Araport11: a complete reannotation of the Arabidopsis thaliana reference genome.</title>
        <authorList>
            <person name="Cheng C.Y."/>
            <person name="Krishnakumar V."/>
            <person name="Chan A.P."/>
            <person name="Thibaud-Nissen F."/>
            <person name="Schobel S."/>
            <person name="Town C.D."/>
        </authorList>
    </citation>
    <scope>GENOME REANNOTATION</scope>
    <source>
        <strain>cv. Columbia</strain>
    </source>
</reference>
<reference key="3">
    <citation type="journal article" date="2003" name="Science">
        <title>Empirical analysis of transcriptional activity in the Arabidopsis genome.</title>
        <authorList>
            <person name="Yamada K."/>
            <person name="Lim J."/>
            <person name="Dale J.M."/>
            <person name="Chen H."/>
            <person name="Shinn P."/>
            <person name="Palm C.J."/>
            <person name="Southwick A.M."/>
            <person name="Wu H.C."/>
            <person name="Kim C.J."/>
            <person name="Nguyen M."/>
            <person name="Pham P.K."/>
            <person name="Cheuk R.F."/>
            <person name="Karlin-Newmann G."/>
            <person name="Liu S.X."/>
            <person name="Lam B."/>
            <person name="Sakano H."/>
            <person name="Wu T."/>
            <person name="Yu G."/>
            <person name="Miranda M."/>
            <person name="Quach H.L."/>
            <person name="Tripp M."/>
            <person name="Chang C.H."/>
            <person name="Lee J.M."/>
            <person name="Toriumi M.J."/>
            <person name="Chan M.M."/>
            <person name="Tang C.C."/>
            <person name="Onodera C.S."/>
            <person name="Deng J.M."/>
            <person name="Akiyama K."/>
            <person name="Ansari Y."/>
            <person name="Arakawa T."/>
            <person name="Banh J."/>
            <person name="Banno F."/>
            <person name="Bowser L."/>
            <person name="Brooks S.Y."/>
            <person name="Carninci P."/>
            <person name="Chao Q."/>
            <person name="Choy N."/>
            <person name="Enju A."/>
            <person name="Goldsmith A.D."/>
            <person name="Gurjal M."/>
            <person name="Hansen N.F."/>
            <person name="Hayashizaki Y."/>
            <person name="Johnson-Hopson C."/>
            <person name="Hsuan V.W."/>
            <person name="Iida K."/>
            <person name="Karnes M."/>
            <person name="Khan S."/>
            <person name="Koesema E."/>
            <person name="Ishida J."/>
            <person name="Jiang P.X."/>
            <person name="Jones T."/>
            <person name="Kawai J."/>
            <person name="Kamiya A."/>
            <person name="Meyers C."/>
            <person name="Nakajima M."/>
            <person name="Narusaka M."/>
            <person name="Seki M."/>
            <person name="Sakurai T."/>
            <person name="Satou M."/>
            <person name="Tamse R."/>
            <person name="Vaysberg M."/>
            <person name="Wallender E.K."/>
            <person name="Wong C."/>
            <person name="Yamamura Y."/>
            <person name="Yuan S."/>
            <person name="Shinozaki K."/>
            <person name="Davis R.W."/>
            <person name="Theologis A."/>
            <person name="Ecker J.R."/>
        </authorList>
    </citation>
    <scope>NUCLEOTIDE SEQUENCE [LARGE SCALE MRNA]</scope>
    <source>
        <strain>cv. Columbia</strain>
    </source>
</reference>
<reference key="4">
    <citation type="journal article" date="2001" name="Plant Cell">
        <title>Comparative sequence analysis reveals extensive microcolinearity in the lateral suppressor regions of the tomato, Arabidopsis, and Capsella genomes.</title>
        <authorList>
            <person name="Rossberg M."/>
            <person name="Theres K."/>
            <person name="Acarkan A."/>
            <person name="Herrero R."/>
            <person name="Schmitt T."/>
            <person name="Schumacher K."/>
            <person name="Schmitz G."/>
            <person name="Schmidt R."/>
        </authorList>
    </citation>
    <scope>NUCLEOTIDE SEQUENCE [MRNA] OF 7-607</scope>
</reference>
<proteinExistence type="evidence at transcript level"/>
<name>ATB_ARATH</name>
<keyword id="KW-0433">Leucine-rich repeat</keyword>
<keyword id="KW-1185">Reference proteome</keyword>
<keyword id="KW-0677">Repeat</keyword>
<accession>Q9ZWC6</accession>
<accession>Q9ARM4</accession>
<accession>Q9ARM5</accession>
<feature type="chain" id="PRO_0000272204" description="F-box protein At-B">
    <location>
        <begin position="1"/>
        <end position="607"/>
    </location>
</feature>
<feature type="domain" description="F-box">
    <location>
        <begin position="9"/>
        <end position="47"/>
    </location>
</feature>
<feature type="repeat" description="LRR 1">
    <location>
        <begin position="51"/>
        <end position="76"/>
    </location>
</feature>
<feature type="repeat" description="LRR 2">
    <location>
        <begin position="77"/>
        <end position="99"/>
    </location>
</feature>
<feature type="repeat" description="LRR 3">
    <location>
        <begin position="100"/>
        <end position="125"/>
    </location>
</feature>
<feature type="repeat" description="LRR 4">
    <location>
        <begin position="130"/>
        <end position="155"/>
    </location>
</feature>
<feature type="repeat" description="LRR 5">
    <location>
        <begin position="228"/>
        <end position="253"/>
    </location>
</feature>
<feature type="repeat" description="LRR 6">
    <location>
        <begin position="262"/>
        <end position="286"/>
    </location>
</feature>
<feature type="repeat" description="LRR 7">
    <location>
        <begin position="295"/>
        <end position="320"/>
    </location>
</feature>
<feature type="repeat" description="LRR 8">
    <location>
        <begin position="321"/>
        <end position="346"/>
    </location>
</feature>
<feature type="repeat" description="LRR 9">
    <location>
        <begin position="347"/>
        <end position="372"/>
    </location>
</feature>
<feature type="repeat" description="LRR 10">
    <location>
        <begin position="373"/>
        <end position="397"/>
    </location>
</feature>
<feature type="repeat" description="LRR 11">
    <location>
        <begin position="398"/>
        <end position="422"/>
    </location>
</feature>
<feature type="repeat" description="LRR 12">
    <location>
        <begin position="424"/>
        <end position="447"/>
    </location>
</feature>
<feature type="repeat" description="LRR 13">
    <location>
        <begin position="448"/>
        <end position="477"/>
    </location>
</feature>
<feature type="repeat" description="LRR 14">
    <location>
        <begin position="478"/>
        <end position="503"/>
    </location>
</feature>
<feature type="repeat" description="LRR 15">
    <location>
        <begin position="504"/>
        <end position="536"/>
    </location>
</feature>
<feature type="repeat" description="LRR 16">
    <location>
        <begin position="537"/>
        <end position="563"/>
    </location>
</feature>
<gene>
    <name type="primary">ATB</name>
    <name type="ordered locus">At1g55590</name>
    <name type="ORF">F20N2.2</name>
</gene>
<dbReference type="EMBL" id="AC002328">
    <property type="protein sequence ID" value="AAF79512.1"/>
    <property type="molecule type" value="Genomic_DNA"/>
</dbReference>
<dbReference type="EMBL" id="CP002684">
    <property type="protein sequence ID" value="AEE33269.1"/>
    <property type="molecule type" value="Genomic_DNA"/>
</dbReference>
<dbReference type="EMBL" id="AY102102">
    <property type="protein sequence ID" value="AAM26672.1"/>
    <property type="molecule type" value="mRNA"/>
</dbReference>
<dbReference type="EMBL" id="BT001062">
    <property type="protein sequence ID" value="AAN46816.1"/>
    <property type="molecule type" value="mRNA"/>
</dbReference>
<dbReference type="EMBL" id="AJ303346">
    <property type="protein sequence ID" value="CAC36384.1"/>
    <property type="molecule type" value="mRNA"/>
</dbReference>
<dbReference type="EMBL" id="AJ303347">
    <property type="protein sequence ID" value="CAC36385.1"/>
    <property type="molecule type" value="mRNA"/>
</dbReference>
<dbReference type="PIR" id="E96598">
    <property type="entry name" value="E96598"/>
</dbReference>
<dbReference type="RefSeq" id="NP_175955.1">
    <property type="nucleotide sequence ID" value="NM_104435.3"/>
</dbReference>
<dbReference type="SMR" id="Q9ZWC6"/>
<dbReference type="FunCoup" id="Q9ZWC6">
    <property type="interactions" value="471"/>
</dbReference>
<dbReference type="IntAct" id="Q9ZWC6">
    <property type="interactions" value="1"/>
</dbReference>
<dbReference type="STRING" id="3702.Q9ZWC6"/>
<dbReference type="PaxDb" id="3702-AT1G55590.1"/>
<dbReference type="ProteomicsDB" id="240982"/>
<dbReference type="EnsemblPlants" id="AT1G55590.1">
    <property type="protein sequence ID" value="AT1G55590.1"/>
    <property type="gene ID" value="AT1G55590"/>
</dbReference>
<dbReference type="GeneID" id="842008"/>
<dbReference type="Gramene" id="AT1G55590.1">
    <property type="protein sequence ID" value="AT1G55590.1"/>
    <property type="gene ID" value="AT1G55590"/>
</dbReference>
<dbReference type="KEGG" id="ath:AT1G55590"/>
<dbReference type="Araport" id="AT1G55590"/>
<dbReference type="TAIR" id="AT1G55590"/>
<dbReference type="eggNOG" id="KOG1947">
    <property type="taxonomic scope" value="Eukaryota"/>
</dbReference>
<dbReference type="HOGENOM" id="CLU_036665_0_0_1"/>
<dbReference type="InParanoid" id="Q9ZWC6"/>
<dbReference type="OMA" id="GWQFHRS"/>
<dbReference type="PhylomeDB" id="Q9ZWC6"/>
<dbReference type="PRO" id="PR:Q9ZWC6"/>
<dbReference type="Proteomes" id="UP000006548">
    <property type="component" value="Chromosome 1"/>
</dbReference>
<dbReference type="ExpressionAtlas" id="Q9ZWC6">
    <property type="expression patterns" value="baseline and differential"/>
</dbReference>
<dbReference type="FunFam" id="3.80.10.10:FF:000802">
    <property type="entry name" value="F-box protein At-B"/>
    <property type="match status" value="1"/>
</dbReference>
<dbReference type="Gene3D" id="3.80.10.10">
    <property type="entry name" value="Ribonuclease Inhibitor"/>
    <property type="match status" value="4"/>
</dbReference>
<dbReference type="InterPro" id="IPR001810">
    <property type="entry name" value="F-box_dom"/>
</dbReference>
<dbReference type="InterPro" id="IPR001611">
    <property type="entry name" value="Leu-rich_rpt"/>
</dbReference>
<dbReference type="InterPro" id="IPR006553">
    <property type="entry name" value="Leu-rich_rpt_Cys-con_subtyp"/>
</dbReference>
<dbReference type="InterPro" id="IPR032675">
    <property type="entry name" value="LRR_dom_sf"/>
</dbReference>
<dbReference type="PANTHER" id="PTHR13318:SF176">
    <property type="entry name" value="F-BOX PROTEIN AT-B"/>
    <property type="match status" value="1"/>
</dbReference>
<dbReference type="PANTHER" id="PTHR13318">
    <property type="entry name" value="PARTNER OF PAIRED, ISOFORM B-RELATED"/>
    <property type="match status" value="1"/>
</dbReference>
<dbReference type="Pfam" id="PF00646">
    <property type="entry name" value="F-box"/>
    <property type="match status" value="1"/>
</dbReference>
<dbReference type="Pfam" id="PF13516">
    <property type="entry name" value="LRR_6"/>
    <property type="match status" value="1"/>
</dbReference>
<dbReference type="SMART" id="SM00367">
    <property type="entry name" value="LRR_CC"/>
    <property type="match status" value="9"/>
</dbReference>
<dbReference type="SUPFAM" id="SSF52047">
    <property type="entry name" value="RNI-like"/>
    <property type="match status" value="2"/>
</dbReference>
<organism>
    <name type="scientific">Arabidopsis thaliana</name>
    <name type="common">Mouse-ear cress</name>
    <dbReference type="NCBI Taxonomy" id="3702"/>
    <lineage>
        <taxon>Eukaryota</taxon>
        <taxon>Viridiplantae</taxon>
        <taxon>Streptophyta</taxon>
        <taxon>Embryophyta</taxon>
        <taxon>Tracheophyta</taxon>
        <taxon>Spermatophyta</taxon>
        <taxon>Magnoliopsida</taxon>
        <taxon>eudicotyledons</taxon>
        <taxon>Gunneridae</taxon>
        <taxon>Pentapetalae</taxon>
        <taxon>rosids</taxon>
        <taxon>malvids</taxon>
        <taxon>Brassicales</taxon>
        <taxon>Brassicaceae</taxon>
        <taxon>Camelineae</taxon>
        <taxon>Arabidopsis</taxon>
    </lineage>
</organism>